<keyword id="KW-0067">ATP-binding</keyword>
<keyword id="KW-0143">Chaperone</keyword>
<keyword id="KW-0547">Nucleotide-binding</keyword>
<keyword id="KW-1185">Reference proteome</keyword>
<dbReference type="EMBL" id="U00096">
    <property type="protein sequence ID" value="AAC75130.2"/>
    <property type="molecule type" value="Genomic_DNA"/>
</dbReference>
<dbReference type="EMBL" id="AP009048">
    <property type="protein sequence ID" value="BAA15927.1"/>
    <property type="molecule type" value="Genomic_DNA"/>
</dbReference>
<dbReference type="EMBL" id="K02498">
    <property type="status" value="NOT_ANNOTATED_CDS"/>
    <property type="molecule type" value="Genomic_DNA"/>
</dbReference>
<dbReference type="PIR" id="D64973">
    <property type="entry name" value="D64973"/>
</dbReference>
<dbReference type="RefSeq" id="NP_416573.4">
    <property type="nucleotide sequence ID" value="NC_000913.3"/>
</dbReference>
<dbReference type="RefSeq" id="WP_000469708.1">
    <property type="nucleotide sequence ID" value="NZ_LN832404.1"/>
</dbReference>
<dbReference type="SMR" id="P36928"/>
<dbReference type="BioGRID" id="4259695">
    <property type="interactions" value="218"/>
</dbReference>
<dbReference type="FunCoup" id="P36928">
    <property type="interactions" value="24"/>
</dbReference>
<dbReference type="IntAct" id="P36928">
    <property type="interactions" value="6"/>
</dbReference>
<dbReference type="STRING" id="511145.b2069"/>
<dbReference type="jPOST" id="P36928"/>
<dbReference type="PaxDb" id="511145-b2069"/>
<dbReference type="DNASU" id="947234"/>
<dbReference type="EnsemblBacteria" id="AAC75130">
    <property type="protein sequence ID" value="AAC75130"/>
    <property type="gene ID" value="b2069"/>
</dbReference>
<dbReference type="GeneID" id="947234"/>
<dbReference type="KEGG" id="ecj:JW2054"/>
<dbReference type="KEGG" id="eco:b2069"/>
<dbReference type="KEGG" id="ecoc:C3026_11640"/>
<dbReference type="PATRIC" id="fig|511145.12.peg.2146"/>
<dbReference type="EchoBASE" id="EB2116"/>
<dbReference type="eggNOG" id="COG0443">
    <property type="taxonomic scope" value="Bacteria"/>
</dbReference>
<dbReference type="HOGENOM" id="CLU_033976_0_0_6"/>
<dbReference type="InParanoid" id="P36928"/>
<dbReference type="OMA" id="EQRAGHW"/>
<dbReference type="OrthoDB" id="9807934at2"/>
<dbReference type="PhylomeDB" id="P36928"/>
<dbReference type="BioCyc" id="EcoCyc:EG12200-MONOMER"/>
<dbReference type="PRO" id="PR:P36928"/>
<dbReference type="Proteomes" id="UP000000625">
    <property type="component" value="Chromosome"/>
</dbReference>
<dbReference type="GO" id="GO:0005829">
    <property type="term" value="C:cytosol"/>
    <property type="evidence" value="ECO:0000318"/>
    <property type="project" value="GO_Central"/>
</dbReference>
<dbReference type="GO" id="GO:0005524">
    <property type="term" value="F:ATP binding"/>
    <property type="evidence" value="ECO:0007669"/>
    <property type="project" value="UniProtKB-KW"/>
</dbReference>
<dbReference type="GO" id="GO:0016887">
    <property type="term" value="F:ATP hydrolysis activity"/>
    <property type="evidence" value="ECO:0000318"/>
    <property type="project" value="GO_Central"/>
</dbReference>
<dbReference type="GO" id="GO:0140662">
    <property type="term" value="F:ATP-dependent protein folding chaperone"/>
    <property type="evidence" value="ECO:0007669"/>
    <property type="project" value="InterPro"/>
</dbReference>
<dbReference type="GO" id="GO:0031072">
    <property type="term" value="F:heat shock protein binding"/>
    <property type="evidence" value="ECO:0000318"/>
    <property type="project" value="GO_Central"/>
</dbReference>
<dbReference type="GO" id="GO:0044183">
    <property type="term" value="F:protein folding chaperone"/>
    <property type="evidence" value="ECO:0000318"/>
    <property type="project" value="GO_Central"/>
</dbReference>
<dbReference type="GO" id="GO:0051085">
    <property type="term" value="P:chaperone cofactor-dependent protein refolding"/>
    <property type="evidence" value="ECO:0000318"/>
    <property type="project" value="GO_Central"/>
</dbReference>
<dbReference type="GO" id="GO:0042026">
    <property type="term" value="P:protein refolding"/>
    <property type="evidence" value="ECO:0000318"/>
    <property type="project" value="GO_Central"/>
</dbReference>
<dbReference type="CDD" id="cd10231">
    <property type="entry name" value="ASKHA_NBD_HSP70_YegD-like"/>
    <property type="match status" value="1"/>
</dbReference>
<dbReference type="Gene3D" id="3.30.420.40">
    <property type="match status" value="2"/>
</dbReference>
<dbReference type="Gene3D" id="3.90.640.10">
    <property type="entry name" value="Actin, Chain A, domain 4"/>
    <property type="match status" value="1"/>
</dbReference>
<dbReference type="InterPro" id="IPR043129">
    <property type="entry name" value="ATPase_NBD"/>
</dbReference>
<dbReference type="InterPro" id="IPR018181">
    <property type="entry name" value="Heat_shock_70_CS"/>
</dbReference>
<dbReference type="InterPro" id="IPR013126">
    <property type="entry name" value="Hsp_70_fam"/>
</dbReference>
<dbReference type="InterPro" id="IPR042054">
    <property type="entry name" value="YegD-like"/>
</dbReference>
<dbReference type="NCBIfam" id="NF008673">
    <property type="entry name" value="PRK11678.1"/>
    <property type="match status" value="1"/>
</dbReference>
<dbReference type="PANTHER" id="PTHR19375">
    <property type="entry name" value="HEAT SHOCK PROTEIN 70KDA"/>
    <property type="match status" value="1"/>
</dbReference>
<dbReference type="Pfam" id="PF00012">
    <property type="entry name" value="HSP70"/>
    <property type="match status" value="2"/>
</dbReference>
<dbReference type="SUPFAM" id="SSF53067">
    <property type="entry name" value="Actin-like ATPase domain"/>
    <property type="match status" value="2"/>
</dbReference>
<dbReference type="PROSITE" id="PS00329">
    <property type="entry name" value="HSP70_2"/>
    <property type="match status" value="1"/>
</dbReference>
<comment type="similarity">
    <text evidence="1">Belongs to the heat shock protein 70 family.</text>
</comment>
<reference key="1">
    <citation type="journal article" date="1996" name="DNA Res.">
        <title>A 460-kb DNA sequence of the Escherichia coli K-12 genome corresponding to the 40.1-50.0 min region on the linkage map.</title>
        <authorList>
            <person name="Itoh T."/>
            <person name="Aiba H."/>
            <person name="Baba T."/>
            <person name="Fujita K."/>
            <person name="Hayashi K."/>
            <person name="Inada T."/>
            <person name="Isono K."/>
            <person name="Kasai H."/>
            <person name="Kimura S."/>
            <person name="Kitakawa M."/>
            <person name="Kitagawa M."/>
            <person name="Makino K."/>
            <person name="Miki T."/>
            <person name="Mizobuchi K."/>
            <person name="Mori H."/>
            <person name="Mori T."/>
            <person name="Motomura K."/>
            <person name="Nakade S."/>
            <person name="Nakamura Y."/>
            <person name="Nashimoto H."/>
            <person name="Nishio Y."/>
            <person name="Oshima T."/>
            <person name="Saito N."/>
            <person name="Sampei G."/>
            <person name="Seki Y."/>
            <person name="Sivasundaram S."/>
            <person name="Tagami H."/>
            <person name="Takeda J."/>
            <person name="Takemoto K."/>
            <person name="Wada C."/>
            <person name="Yamamoto Y."/>
            <person name="Horiuchi T."/>
        </authorList>
    </citation>
    <scope>NUCLEOTIDE SEQUENCE [LARGE SCALE GENOMIC DNA]</scope>
    <source>
        <strain>K12 / W3110 / ATCC 27325 / DSM 5911</strain>
    </source>
</reference>
<reference key="2">
    <citation type="journal article" date="1997" name="Science">
        <title>The complete genome sequence of Escherichia coli K-12.</title>
        <authorList>
            <person name="Blattner F.R."/>
            <person name="Plunkett G. III"/>
            <person name="Bloch C.A."/>
            <person name="Perna N.T."/>
            <person name="Burland V."/>
            <person name="Riley M."/>
            <person name="Collado-Vides J."/>
            <person name="Glasner J.D."/>
            <person name="Rode C.K."/>
            <person name="Mayhew G.F."/>
            <person name="Gregor J."/>
            <person name="Davis N.W."/>
            <person name="Kirkpatrick H.A."/>
            <person name="Goeden M.A."/>
            <person name="Rose D.J."/>
            <person name="Mau B."/>
            <person name="Shao Y."/>
        </authorList>
    </citation>
    <scope>NUCLEOTIDE SEQUENCE [LARGE SCALE GENOMIC DNA]</scope>
    <source>
        <strain>K12 / MG1655 / ATCC 47076</strain>
    </source>
</reference>
<reference key="3">
    <citation type="journal article" date="2006" name="Mol. Syst. Biol.">
        <title>Highly accurate genome sequences of Escherichia coli K-12 strains MG1655 and W3110.</title>
        <authorList>
            <person name="Hayashi K."/>
            <person name="Morooka N."/>
            <person name="Yamamoto Y."/>
            <person name="Fujita K."/>
            <person name="Isono K."/>
            <person name="Choi S."/>
            <person name="Ohtsubo E."/>
            <person name="Baba T."/>
            <person name="Wanner B.L."/>
            <person name="Mori H."/>
            <person name="Horiuchi T."/>
        </authorList>
    </citation>
    <scope>NUCLEOTIDE SEQUENCE [LARGE SCALE GENOMIC DNA]</scope>
    <source>
        <strain>K12 / W3110 / ATCC 27325 / DSM 5911</strain>
    </source>
</reference>
<reference key="4">
    <citation type="journal article" date="1984" name="J. Biol. Chem.">
        <title>Structure and expression of the alkA gene of Escherichia coli involved in adaptive response to alkylating agents.</title>
        <authorList>
            <person name="Nakabeppu Y."/>
            <person name="Miyata T."/>
            <person name="Kondo H."/>
            <person name="Iwanaga S."/>
            <person name="Sekiguchi M."/>
        </authorList>
    </citation>
    <scope>NUCLEOTIDE SEQUENCE [GENOMIC DNA] OF 1-147</scope>
</reference>
<reference key="5">
    <citation type="journal article" date="1994" name="Trends Biochem. Sci.">
        <title>New genes in old sequence: a strategy for finding genes in the bacterial genome.</title>
        <authorList>
            <person name="Borodovsky M."/>
            <person name="Koonin E.V."/>
            <person name="Rudd K.E."/>
        </authorList>
    </citation>
    <scope>IDENTIFICATION</scope>
</reference>
<reference key="6">
    <citation type="journal article" date="1994" name="Nucleic Acids Res.">
        <title>Intrinsic and extrinsic approaches for detecting genes in a bacterial genome.</title>
        <authorList>
            <person name="Borodovsky M."/>
            <person name="Rudd K.E."/>
            <person name="Koonin E.V."/>
        </authorList>
    </citation>
    <scope>IDENTIFICATION</scope>
</reference>
<protein>
    <recommendedName>
        <fullName>Uncharacterized chaperone protein YegD</fullName>
    </recommendedName>
</protein>
<proteinExistence type="inferred from homology"/>
<sequence length="450" mass="49371">MFIGFDYGTANCSVAVMRDGKPHLLKMENDSTLLPSMLCAPTREAVSEWLYRHHDVPADDDETQALLRRAIRYNREEDIDVTAKSVQFGLSSLAQYIDDPEEVWFVKSPKSFLGASGLKPQQVALFEDLVCAMMLHIRQQAQAQLPEAITQAVIGRPINFQGLGGDEANTQAQGILERAAKRAGFRDVVFQYEPVAAGLDYEATLQEEKRVLVVDIGGGTTDCSLLLMGPQWRSRLDREASLLGHSGCRIGGNDLDIALAFKNLMPLLGMGGETEKGIALPILPWWNAVAINDVPAQSDFYSSANGRLLNDLVRDAREPEKVALLQKVWRQRLSYRLVRSAEECKIALSSVAETRASLPFISNELATLISQRGLESALSQPLTRILEQVQLALDNAQEKPDVIYLTGGSARSPLIKKALAEQLPGIPIAGGDDFGSVTAGLARWAEVVFR</sequence>
<accession>P36928</accession>
<accession>P76392</accession>
<evidence type="ECO:0000305" key="1"/>
<feature type="chain" id="PRO_0000078660" description="Uncharacterized chaperone protein YegD">
    <location>
        <begin position="1"/>
        <end position="450"/>
    </location>
</feature>
<feature type="sequence conflict" description="In Ref. 4." evidence="1" ref="4">
    <original>LPE</original>
    <variation>GIL</variation>
    <location>
        <begin position="145"/>
        <end position="147"/>
    </location>
</feature>
<name>YEGD_ECOLI</name>
<organism>
    <name type="scientific">Escherichia coli (strain K12)</name>
    <dbReference type="NCBI Taxonomy" id="83333"/>
    <lineage>
        <taxon>Bacteria</taxon>
        <taxon>Pseudomonadati</taxon>
        <taxon>Pseudomonadota</taxon>
        <taxon>Gammaproteobacteria</taxon>
        <taxon>Enterobacterales</taxon>
        <taxon>Enterobacteriaceae</taxon>
        <taxon>Escherichia</taxon>
    </lineage>
</organism>
<gene>
    <name type="primary">yegD</name>
    <name type="ordered locus">b2069</name>
    <name type="ordered locus">JW2054</name>
</gene>